<dbReference type="EC" id="2.1.1.-"/>
<dbReference type="EMBL" id="AJ235271">
    <property type="protein sequence ID" value="CAA14915.1"/>
    <property type="molecule type" value="Genomic_DNA"/>
</dbReference>
<dbReference type="PIR" id="A71705">
    <property type="entry name" value="A71705"/>
</dbReference>
<dbReference type="RefSeq" id="NP_220839.1">
    <property type="nucleotide sequence ID" value="NC_000963.1"/>
</dbReference>
<dbReference type="SMR" id="Q9ZD84"/>
<dbReference type="STRING" id="272947.gene:17555539"/>
<dbReference type="EnsemblBacteria" id="CAA14915">
    <property type="protein sequence ID" value="CAA14915"/>
    <property type="gene ID" value="CAA14915"/>
</dbReference>
<dbReference type="KEGG" id="rpr:RP459"/>
<dbReference type="PATRIC" id="fig|272947.5.peg.471"/>
<dbReference type="eggNOG" id="COG2226">
    <property type="taxonomic scope" value="Bacteria"/>
</dbReference>
<dbReference type="HOGENOM" id="CLU_046586_4_0_5"/>
<dbReference type="OrthoDB" id="9793723at2"/>
<dbReference type="Proteomes" id="UP000002480">
    <property type="component" value="Chromosome"/>
</dbReference>
<dbReference type="GO" id="GO:0008757">
    <property type="term" value="F:S-adenosylmethionine-dependent methyltransferase activity"/>
    <property type="evidence" value="ECO:0007669"/>
    <property type="project" value="InterPro"/>
</dbReference>
<dbReference type="GO" id="GO:0032259">
    <property type="term" value="P:methylation"/>
    <property type="evidence" value="ECO:0007669"/>
    <property type="project" value="UniProtKB-KW"/>
</dbReference>
<dbReference type="Gene3D" id="3.40.50.150">
    <property type="entry name" value="Vaccinia Virus protein VP39"/>
    <property type="match status" value="1"/>
</dbReference>
<dbReference type="InterPro" id="IPR050602">
    <property type="entry name" value="Malonyl-ACP_OMT"/>
</dbReference>
<dbReference type="InterPro" id="IPR013216">
    <property type="entry name" value="Methyltransf_11"/>
</dbReference>
<dbReference type="InterPro" id="IPR029063">
    <property type="entry name" value="SAM-dependent_MTases_sf"/>
</dbReference>
<dbReference type="PANTHER" id="PTHR13090">
    <property type="entry name" value="ARGININE-HYDROXYLASE NDUFAF5, MITOCHONDRIAL"/>
    <property type="match status" value="1"/>
</dbReference>
<dbReference type="PANTHER" id="PTHR13090:SF1">
    <property type="entry name" value="ARGININE-HYDROXYLASE NDUFAF5, MITOCHONDRIAL"/>
    <property type="match status" value="1"/>
</dbReference>
<dbReference type="Pfam" id="PF08241">
    <property type="entry name" value="Methyltransf_11"/>
    <property type="match status" value="1"/>
</dbReference>
<dbReference type="SUPFAM" id="SSF53335">
    <property type="entry name" value="S-adenosyl-L-methionine-dependent methyltransferases"/>
    <property type="match status" value="1"/>
</dbReference>
<keyword id="KW-0489">Methyltransferase</keyword>
<keyword id="KW-1185">Reference proteome</keyword>
<keyword id="KW-0808">Transferase</keyword>
<name>Y459_RICPR</name>
<evidence type="ECO:0000305" key="1"/>
<organism>
    <name type="scientific">Rickettsia prowazekii (strain Madrid E)</name>
    <dbReference type="NCBI Taxonomy" id="272947"/>
    <lineage>
        <taxon>Bacteria</taxon>
        <taxon>Pseudomonadati</taxon>
        <taxon>Pseudomonadota</taxon>
        <taxon>Alphaproteobacteria</taxon>
        <taxon>Rickettsiales</taxon>
        <taxon>Rickettsiaceae</taxon>
        <taxon>Rickettsieae</taxon>
        <taxon>Rickettsia</taxon>
        <taxon>typhus group</taxon>
    </lineage>
</organism>
<protein>
    <recommendedName>
        <fullName>Putative methyltransferase RP459</fullName>
        <ecNumber>2.1.1.-</ecNumber>
    </recommendedName>
</protein>
<sequence>MIDKSSADILEISAKCGYLTGLLKNVYRSANIIVTDMSPLLLDSFDHNHKLLIDDENLEFQKDSFDLIIYSLGLHWINDVQRFLYNIRTFLKSDGIFIGNFVGGDSLKNLRKSLIDNEIASGFKHSPHISPFIHFDHVPMLLLHAGFSEVIVDYENIALKFENPIVLMKEIKNIGESNALNSQHNYAISKKMFSLLKNYINVFEDNITLISFIAAPNKNSLRLKLL</sequence>
<gene>
    <name type="ordered locus">RP459</name>
</gene>
<proteinExistence type="inferred from homology"/>
<accession>Q9ZD84</accession>
<reference key="1">
    <citation type="journal article" date="1998" name="Nature">
        <title>The genome sequence of Rickettsia prowazekii and the origin of mitochondria.</title>
        <authorList>
            <person name="Andersson S.G.E."/>
            <person name="Zomorodipour A."/>
            <person name="Andersson J.O."/>
            <person name="Sicheritz-Ponten T."/>
            <person name="Alsmark U.C.M."/>
            <person name="Podowski R.M."/>
            <person name="Naeslund A.K."/>
            <person name="Eriksson A.-S."/>
            <person name="Winkler H.H."/>
            <person name="Kurland C.G."/>
        </authorList>
    </citation>
    <scope>NUCLEOTIDE SEQUENCE [LARGE SCALE GENOMIC DNA]</scope>
    <source>
        <strain>Madrid E</strain>
    </source>
</reference>
<feature type="chain" id="PRO_0000101375" description="Putative methyltransferase RP459">
    <location>
        <begin position="1"/>
        <end position="226"/>
    </location>
</feature>
<comment type="similarity">
    <text evidence="1">Belongs to the methyltransferase superfamily.</text>
</comment>